<keyword id="KW-0002">3D-structure</keyword>
<keyword id="KW-0150">Chloroplast</keyword>
<keyword id="KW-0903">Direct protein sequencing</keyword>
<keyword id="KW-0472">Membrane</keyword>
<keyword id="KW-0602">Photosynthesis</keyword>
<keyword id="KW-0603">Photosystem I</keyword>
<keyword id="KW-0934">Plastid</keyword>
<keyword id="KW-1185">Reference proteome</keyword>
<keyword id="KW-0793">Thylakoid</keyword>
<keyword id="KW-0812">Transmembrane</keyword>
<keyword id="KW-1133">Transmembrane helix</keyword>
<proteinExistence type="evidence at protein level"/>
<name>PSAJ_SPIOL</name>
<organism>
    <name type="scientific">Spinacia oleracea</name>
    <name type="common">Spinach</name>
    <dbReference type="NCBI Taxonomy" id="3562"/>
    <lineage>
        <taxon>Eukaryota</taxon>
        <taxon>Viridiplantae</taxon>
        <taxon>Streptophyta</taxon>
        <taxon>Embryophyta</taxon>
        <taxon>Tracheophyta</taxon>
        <taxon>Spermatophyta</taxon>
        <taxon>Magnoliopsida</taxon>
        <taxon>eudicotyledons</taxon>
        <taxon>Gunneridae</taxon>
        <taxon>Pentapetalae</taxon>
        <taxon>Caryophyllales</taxon>
        <taxon>Chenopodiaceae</taxon>
        <taxon>Chenopodioideae</taxon>
        <taxon>Anserineae</taxon>
        <taxon>Spinacia</taxon>
    </lineage>
</organism>
<evidence type="ECO:0000250" key="1"/>
<evidence type="ECO:0000255" key="2"/>
<evidence type="ECO:0000305" key="3"/>
<evidence type="ECO:0007829" key="4">
    <source>
        <dbReference type="PDB" id="2WSC"/>
    </source>
</evidence>
<protein>
    <recommendedName>
        <fullName>Photosystem I reaction center subunit IX</fullName>
    </recommendedName>
    <alternativeName>
        <fullName>PSI-J</fullName>
    </alternativeName>
</protein>
<gene>
    <name type="primary">psaJ</name>
</gene>
<feature type="chain" id="PRO_0000207816" description="Photosystem I reaction center subunit IX">
    <location>
        <begin position="1"/>
        <end position="44"/>
    </location>
</feature>
<feature type="transmembrane region" description="Helical" evidence="2">
    <location>
        <begin position="7"/>
        <end position="27"/>
    </location>
</feature>
<feature type="helix" evidence="4">
    <location>
        <begin position="15"/>
        <end position="17"/>
    </location>
</feature>
<feature type="turn" evidence="4">
    <location>
        <begin position="18"/>
        <end position="21"/>
    </location>
</feature>
<feature type="helix" evidence="4">
    <location>
        <begin position="22"/>
        <end position="24"/>
    </location>
</feature>
<feature type="strand" evidence="4">
    <location>
        <begin position="27"/>
        <end position="29"/>
    </location>
</feature>
<feature type="turn" evidence="4">
    <location>
        <begin position="30"/>
        <end position="32"/>
    </location>
</feature>
<accession>P17230</accession>
<accession>Q9M3K9</accession>
<comment type="function">
    <text>May help in the organization of the PsaE and PsaF subunits.</text>
</comment>
<comment type="subcellular location">
    <subcellularLocation>
        <location evidence="1">Plastid</location>
        <location evidence="1">Chloroplast thylakoid membrane</location>
        <topology evidence="1">Single-pass membrane protein</topology>
    </subcellularLocation>
</comment>
<comment type="similarity">
    <text evidence="3">Belongs to the PsaJ family.</text>
</comment>
<dbReference type="EMBL" id="AJ400848">
    <property type="protein sequence ID" value="CAB88748.1"/>
    <property type="molecule type" value="Genomic_DNA"/>
</dbReference>
<dbReference type="PIR" id="S09732">
    <property type="entry name" value="S09732"/>
</dbReference>
<dbReference type="RefSeq" id="NP_054955.1">
    <property type="nucleotide sequence ID" value="NC_002202.1"/>
</dbReference>
<dbReference type="PDB" id="2O01">
    <property type="method" value="X-ray"/>
    <property type="resolution" value="3.40 A"/>
    <property type="chains" value="J=1-42"/>
</dbReference>
<dbReference type="PDB" id="2WSC">
    <property type="method" value="X-ray"/>
    <property type="resolution" value="3.30 A"/>
    <property type="chains" value="J=1-44"/>
</dbReference>
<dbReference type="PDB" id="2WSE">
    <property type="method" value="X-ray"/>
    <property type="resolution" value="3.49 A"/>
    <property type="chains" value="J=1-44"/>
</dbReference>
<dbReference type="PDB" id="2WSF">
    <property type="method" value="X-ray"/>
    <property type="resolution" value="3.48 A"/>
    <property type="chains" value="J=1-44"/>
</dbReference>
<dbReference type="PDBsum" id="2O01"/>
<dbReference type="PDBsum" id="2WSC"/>
<dbReference type="PDBsum" id="2WSE"/>
<dbReference type="PDBsum" id="2WSF"/>
<dbReference type="SMR" id="P17230"/>
<dbReference type="FunCoup" id="P17230">
    <property type="interactions" value="39"/>
</dbReference>
<dbReference type="STRING" id="3562.P17230"/>
<dbReference type="GeneID" id="2715606"/>
<dbReference type="KEGG" id="soe:2715606"/>
<dbReference type="InParanoid" id="P17230"/>
<dbReference type="OrthoDB" id="1844838at2759"/>
<dbReference type="EvolutionaryTrace" id="P17230"/>
<dbReference type="Proteomes" id="UP001155700">
    <property type="component" value="Chloroplast Pltd"/>
</dbReference>
<dbReference type="GO" id="GO:0009535">
    <property type="term" value="C:chloroplast thylakoid membrane"/>
    <property type="evidence" value="ECO:0007669"/>
    <property type="project" value="UniProtKB-SubCell"/>
</dbReference>
<dbReference type="GO" id="GO:0009522">
    <property type="term" value="C:photosystem I"/>
    <property type="evidence" value="ECO:0007669"/>
    <property type="project" value="UniProtKB-KW"/>
</dbReference>
<dbReference type="GO" id="GO:0015979">
    <property type="term" value="P:photosynthesis"/>
    <property type="evidence" value="ECO:0007669"/>
    <property type="project" value="UniProtKB-UniRule"/>
</dbReference>
<dbReference type="FunFam" id="1.20.5.510:FF:000001">
    <property type="entry name" value="Photosystem I reaction center subunit IX"/>
    <property type="match status" value="1"/>
</dbReference>
<dbReference type="Gene3D" id="1.20.5.510">
    <property type="entry name" value="Single helix bin"/>
    <property type="match status" value="1"/>
</dbReference>
<dbReference type="HAMAP" id="MF_00522">
    <property type="entry name" value="PSI_PsaJ"/>
    <property type="match status" value="1"/>
</dbReference>
<dbReference type="InterPro" id="IPR002615">
    <property type="entry name" value="PSI_PsaJ"/>
</dbReference>
<dbReference type="InterPro" id="IPR036062">
    <property type="entry name" value="PSI_PsaJ_sf"/>
</dbReference>
<dbReference type="PANTHER" id="PTHR36082">
    <property type="match status" value="1"/>
</dbReference>
<dbReference type="PANTHER" id="PTHR36082:SF2">
    <property type="entry name" value="PHOTOSYSTEM I REACTION CENTER SUBUNIT IX"/>
    <property type="match status" value="1"/>
</dbReference>
<dbReference type="Pfam" id="PF01701">
    <property type="entry name" value="PSI_PsaJ"/>
    <property type="match status" value="1"/>
</dbReference>
<dbReference type="SUPFAM" id="SSF81544">
    <property type="entry name" value="Subunit IX of photosystem I reaction centre, PsaJ"/>
    <property type="match status" value="1"/>
</dbReference>
<geneLocation type="chloroplast"/>
<sequence>MRDFKTYLSVAPVLSTLWFGSLAGLLIEINRFFPDALTFPFFSF</sequence>
<reference key="1">
    <citation type="journal article" date="2001" name="Plant Mol. Biol.">
        <title>The plastid chromosome of spinach (Spinacia oleracea): complete nucleotide sequence and gene organization.</title>
        <authorList>
            <person name="Schmitz-Linneweber C."/>
            <person name="Maier R.M."/>
            <person name="Alcaraz J.-P."/>
            <person name="Cottet A."/>
            <person name="Herrmann R.G."/>
            <person name="Mache R."/>
        </authorList>
    </citation>
    <scope>NUCLEOTIDE SEQUENCE [LARGE SCALE GENOMIC DNA]</scope>
    <source>
        <strain>cv. Geant d'hiver</strain>
        <strain>cv. Monatol</strain>
    </source>
</reference>
<reference key="2">
    <citation type="journal article" date="1990" name="FEBS Lett.">
        <title>Polypeptide composition of higher plant photosystem I complex. Identification of psaI, psaJ and psaK gene products.</title>
        <authorList>
            <person name="Ikeuchi M."/>
            <person name="Hirano A."/>
            <person name="Hiyama T."/>
            <person name="Inoue Y."/>
        </authorList>
    </citation>
    <scope>PROTEIN SEQUENCE OF 1-16</scope>
</reference>